<evidence type="ECO:0000250" key="1">
    <source>
        <dbReference type="UniProtKB" id="P62862"/>
    </source>
</evidence>
<evidence type="ECO:0000256" key="2">
    <source>
        <dbReference type="SAM" id="MobiDB-lite"/>
    </source>
</evidence>
<evidence type="ECO:0000305" key="3"/>
<dbReference type="EMBL" id="AB039093">
    <property type="protein sequence ID" value="BAB68617.1"/>
    <property type="status" value="ALT_INIT"/>
    <property type="molecule type" value="Genomic_DNA"/>
</dbReference>
<dbReference type="SMR" id="P62867"/>
<dbReference type="Proteomes" id="UP000694415">
    <property type="component" value="Unplaced"/>
</dbReference>
<dbReference type="GO" id="GO:0022627">
    <property type="term" value="C:cytosolic small ribosomal subunit"/>
    <property type="evidence" value="ECO:0007669"/>
    <property type="project" value="TreeGrafter"/>
</dbReference>
<dbReference type="GO" id="GO:0003735">
    <property type="term" value="F:structural constituent of ribosome"/>
    <property type="evidence" value="ECO:0007669"/>
    <property type="project" value="InterPro"/>
</dbReference>
<dbReference type="GO" id="GO:0006412">
    <property type="term" value="P:translation"/>
    <property type="evidence" value="ECO:0007669"/>
    <property type="project" value="InterPro"/>
</dbReference>
<dbReference type="InterPro" id="IPR006846">
    <property type="entry name" value="Ribosomal_eS30"/>
</dbReference>
<dbReference type="PANTHER" id="PTHR12650">
    <property type="entry name" value="40S RIBOSOMAL PROTEIN S30/UBIQUITIN-LIKE PROTEIN FUBI"/>
    <property type="match status" value="1"/>
</dbReference>
<dbReference type="PANTHER" id="PTHR12650:SF15">
    <property type="entry name" value="RIBOSOMAL PROTEIN S30, ISOFORM A"/>
    <property type="match status" value="1"/>
</dbReference>
<dbReference type="Pfam" id="PF04758">
    <property type="entry name" value="Ribosomal_S30"/>
    <property type="match status" value="1"/>
</dbReference>
<gene>
    <name type="primary">Fau</name>
</gene>
<keyword id="KW-1185">Reference proteome</keyword>
<keyword id="KW-0687">Ribonucleoprotein</keyword>
<keyword id="KW-0689">Ribosomal protein</keyword>
<proteinExistence type="inferred from homology"/>
<organism>
    <name type="scientific">Mus spicilegus</name>
    <name type="common">Steppe mouse</name>
    <dbReference type="NCBI Taxonomy" id="10103"/>
    <lineage>
        <taxon>Eukaryota</taxon>
        <taxon>Metazoa</taxon>
        <taxon>Chordata</taxon>
        <taxon>Craniata</taxon>
        <taxon>Vertebrata</taxon>
        <taxon>Euteleostomi</taxon>
        <taxon>Mammalia</taxon>
        <taxon>Eutheria</taxon>
        <taxon>Euarchontoglires</taxon>
        <taxon>Glires</taxon>
        <taxon>Rodentia</taxon>
        <taxon>Myomorpha</taxon>
        <taxon>Muroidea</taxon>
        <taxon>Muridae</taxon>
        <taxon>Murinae</taxon>
        <taxon>Mus</taxon>
        <taxon>Mus</taxon>
    </lineage>
</organism>
<name>RS30_MUSSI</name>
<sequence>KVHGSLARAGKVRGQTPKVAKQEKKKKKTGRAKRRMQYNRRFVNVVPTFGKKKGPNANS</sequence>
<feature type="chain" id="PRO_0000174001" description="Small ribosomal subunit protein eS30">
    <location>
        <begin position="1"/>
        <end position="59"/>
    </location>
</feature>
<feature type="region of interest" description="Disordered" evidence="2">
    <location>
        <begin position="1"/>
        <end position="35"/>
    </location>
</feature>
<feature type="compositionally biased region" description="Basic residues" evidence="2">
    <location>
        <begin position="23"/>
        <end position="35"/>
    </location>
</feature>
<feature type="modified residue" description="N6-succinyllysine" evidence="1">
    <location>
        <position position="51"/>
    </location>
</feature>
<comment type="miscellaneous">
    <text>This ribosomal protein is synthesized as a C-terminal extension protein (CEP) of a ubiquitin-like protein.</text>
</comment>
<comment type="similarity">
    <text evidence="3">Belongs to the eukaryotic ribosomal protein eS30 family.</text>
</comment>
<comment type="sequence caution" evidence="3">
    <conflict type="erroneous initiation">
        <sequence resource="EMBL-CDS" id="BAB68617"/>
    </conflict>
</comment>
<accession>P62867</accession>
<accession>Q920W7</accession>
<reference key="1">
    <citation type="submission" date="2000-02" db="EMBL/GenBank/DDBJ databases">
        <title>Conspicuous differences among gene genealogies of 21 nuclear genes of five Mus musculus subspecies.</title>
        <authorList>
            <person name="Liu Y."/>
            <person name="Kitano T."/>
            <person name="Koide T."/>
            <person name="Shiroishi T."/>
            <person name="Moriwaki K."/>
            <person name="Saitou N."/>
        </authorList>
    </citation>
    <scope>NUCLEOTIDE SEQUENCE [GENOMIC DNA]</scope>
    <source>
        <strain>ZBN</strain>
    </source>
</reference>
<protein>
    <recommendedName>
        <fullName evidence="3">Small ribosomal subunit protein eS30</fullName>
    </recommendedName>
    <alternativeName>
        <fullName>40S ribosomal protein S30</fullName>
    </alternativeName>
</protein>